<gene>
    <name evidence="1" type="primary">ispH</name>
    <name type="ordered locus">Mmc1_3428</name>
</gene>
<name>ISPH_MAGMM</name>
<comment type="function">
    <text evidence="1">Catalyzes the conversion of 1-hydroxy-2-methyl-2-(E)-butenyl 4-diphosphate (HMBPP) into a mixture of isopentenyl diphosphate (IPP) and dimethylallyl diphosphate (DMAPP). Acts in the terminal step of the DOXP/MEP pathway for isoprenoid precursor biosynthesis.</text>
</comment>
<comment type="catalytic activity">
    <reaction evidence="1">
        <text>isopentenyl diphosphate + 2 oxidized [2Fe-2S]-[ferredoxin] + H2O = (2E)-4-hydroxy-3-methylbut-2-enyl diphosphate + 2 reduced [2Fe-2S]-[ferredoxin] + 2 H(+)</text>
        <dbReference type="Rhea" id="RHEA:24488"/>
        <dbReference type="Rhea" id="RHEA-COMP:10000"/>
        <dbReference type="Rhea" id="RHEA-COMP:10001"/>
        <dbReference type="ChEBI" id="CHEBI:15377"/>
        <dbReference type="ChEBI" id="CHEBI:15378"/>
        <dbReference type="ChEBI" id="CHEBI:33737"/>
        <dbReference type="ChEBI" id="CHEBI:33738"/>
        <dbReference type="ChEBI" id="CHEBI:128753"/>
        <dbReference type="ChEBI" id="CHEBI:128769"/>
        <dbReference type="EC" id="1.17.7.4"/>
    </reaction>
</comment>
<comment type="catalytic activity">
    <reaction evidence="1">
        <text>dimethylallyl diphosphate + 2 oxidized [2Fe-2S]-[ferredoxin] + H2O = (2E)-4-hydroxy-3-methylbut-2-enyl diphosphate + 2 reduced [2Fe-2S]-[ferredoxin] + 2 H(+)</text>
        <dbReference type="Rhea" id="RHEA:24825"/>
        <dbReference type="Rhea" id="RHEA-COMP:10000"/>
        <dbReference type="Rhea" id="RHEA-COMP:10001"/>
        <dbReference type="ChEBI" id="CHEBI:15377"/>
        <dbReference type="ChEBI" id="CHEBI:15378"/>
        <dbReference type="ChEBI" id="CHEBI:33737"/>
        <dbReference type="ChEBI" id="CHEBI:33738"/>
        <dbReference type="ChEBI" id="CHEBI:57623"/>
        <dbReference type="ChEBI" id="CHEBI:128753"/>
        <dbReference type="EC" id="1.17.7.4"/>
    </reaction>
</comment>
<comment type="cofactor">
    <cofactor evidence="1">
        <name>[4Fe-4S] cluster</name>
        <dbReference type="ChEBI" id="CHEBI:49883"/>
    </cofactor>
    <text evidence="1">Binds 1 [4Fe-4S] cluster per subunit.</text>
</comment>
<comment type="pathway">
    <text evidence="1">Isoprenoid biosynthesis; dimethylallyl diphosphate biosynthesis; dimethylallyl diphosphate from (2E)-4-hydroxy-3-methylbutenyl diphosphate: step 1/1.</text>
</comment>
<comment type="pathway">
    <text evidence="1">Isoprenoid biosynthesis; isopentenyl diphosphate biosynthesis via DXP pathway; isopentenyl diphosphate from 1-deoxy-D-xylulose 5-phosphate: step 6/6.</text>
</comment>
<comment type="similarity">
    <text evidence="1">Belongs to the IspH family.</text>
</comment>
<protein>
    <recommendedName>
        <fullName evidence="1">4-hydroxy-3-methylbut-2-enyl diphosphate reductase</fullName>
        <shortName evidence="1">HMBPP reductase</shortName>
        <ecNumber evidence="1">1.17.7.4</ecNumber>
    </recommendedName>
</protein>
<feature type="chain" id="PRO_1000058507" description="4-hydroxy-3-methylbut-2-enyl diphosphate reductase">
    <location>
        <begin position="1"/>
        <end position="307"/>
    </location>
</feature>
<feature type="active site" description="Proton donor" evidence="1">
    <location>
        <position position="126"/>
    </location>
</feature>
<feature type="binding site" evidence="1">
    <location>
        <position position="12"/>
    </location>
    <ligand>
        <name>[4Fe-4S] cluster</name>
        <dbReference type="ChEBI" id="CHEBI:49883"/>
    </ligand>
</feature>
<feature type="binding site" evidence="1">
    <location>
        <position position="41"/>
    </location>
    <ligand>
        <name>(2E)-4-hydroxy-3-methylbut-2-enyl diphosphate</name>
        <dbReference type="ChEBI" id="CHEBI:128753"/>
    </ligand>
</feature>
<feature type="binding site" evidence="1">
    <location>
        <position position="41"/>
    </location>
    <ligand>
        <name>dimethylallyl diphosphate</name>
        <dbReference type="ChEBI" id="CHEBI:57623"/>
    </ligand>
</feature>
<feature type="binding site" evidence="1">
    <location>
        <position position="41"/>
    </location>
    <ligand>
        <name>isopentenyl diphosphate</name>
        <dbReference type="ChEBI" id="CHEBI:128769"/>
    </ligand>
</feature>
<feature type="binding site" evidence="1">
    <location>
        <position position="74"/>
    </location>
    <ligand>
        <name>(2E)-4-hydroxy-3-methylbut-2-enyl diphosphate</name>
        <dbReference type="ChEBI" id="CHEBI:128753"/>
    </ligand>
</feature>
<feature type="binding site" evidence="1">
    <location>
        <position position="74"/>
    </location>
    <ligand>
        <name>dimethylallyl diphosphate</name>
        <dbReference type="ChEBI" id="CHEBI:57623"/>
    </ligand>
</feature>
<feature type="binding site" evidence="1">
    <location>
        <position position="74"/>
    </location>
    <ligand>
        <name>isopentenyl diphosphate</name>
        <dbReference type="ChEBI" id="CHEBI:128769"/>
    </ligand>
</feature>
<feature type="binding site" evidence="1">
    <location>
        <position position="96"/>
    </location>
    <ligand>
        <name>[4Fe-4S] cluster</name>
        <dbReference type="ChEBI" id="CHEBI:49883"/>
    </ligand>
</feature>
<feature type="binding site" evidence="1">
    <location>
        <position position="124"/>
    </location>
    <ligand>
        <name>(2E)-4-hydroxy-3-methylbut-2-enyl diphosphate</name>
        <dbReference type="ChEBI" id="CHEBI:128753"/>
    </ligand>
</feature>
<feature type="binding site" evidence="1">
    <location>
        <position position="124"/>
    </location>
    <ligand>
        <name>dimethylallyl diphosphate</name>
        <dbReference type="ChEBI" id="CHEBI:57623"/>
    </ligand>
</feature>
<feature type="binding site" evidence="1">
    <location>
        <position position="124"/>
    </location>
    <ligand>
        <name>isopentenyl diphosphate</name>
        <dbReference type="ChEBI" id="CHEBI:128769"/>
    </ligand>
</feature>
<feature type="binding site" evidence="1">
    <location>
        <position position="165"/>
    </location>
    <ligand>
        <name>(2E)-4-hydroxy-3-methylbut-2-enyl diphosphate</name>
        <dbReference type="ChEBI" id="CHEBI:128753"/>
    </ligand>
</feature>
<feature type="binding site" evidence="1">
    <location>
        <position position="195"/>
    </location>
    <ligand>
        <name>[4Fe-4S] cluster</name>
        <dbReference type="ChEBI" id="CHEBI:49883"/>
    </ligand>
</feature>
<feature type="binding site" evidence="1">
    <location>
        <position position="223"/>
    </location>
    <ligand>
        <name>(2E)-4-hydroxy-3-methylbut-2-enyl diphosphate</name>
        <dbReference type="ChEBI" id="CHEBI:128753"/>
    </ligand>
</feature>
<feature type="binding site" evidence="1">
    <location>
        <position position="223"/>
    </location>
    <ligand>
        <name>dimethylallyl diphosphate</name>
        <dbReference type="ChEBI" id="CHEBI:57623"/>
    </ligand>
</feature>
<feature type="binding site" evidence="1">
    <location>
        <position position="223"/>
    </location>
    <ligand>
        <name>isopentenyl diphosphate</name>
        <dbReference type="ChEBI" id="CHEBI:128769"/>
    </ligand>
</feature>
<feature type="binding site" evidence="1">
    <location>
        <position position="224"/>
    </location>
    <ligand>
        <name>(2E)-4-hydroxy-3-methylbut-2-enyl diphosphate</name>
        <dbReference type="ChEBI" id="CHEBI:128753"/>
    </ligand>
</feature>
<feature type="binding site" evidence="1">
    <location>
        <position position="224"/>
    </location>
    <ligand>
        <name>dimethylallyl diphosphate</name>
        <dbReference type="ChEBI" id="CHEBI:57623"/>
    </ligand>
</feature>
<feature type="binding site" evidence="1">
    <location>
        <position position="224"/>
    </location>
    <ligand>
        <name>isopentenyl diphosphate</name>
        <dbReference type="ChEBI" id="CHEBI:128769"/>
    </ligand>
</feature>
<feature type="binding site" evidence="1">
    <location>
        <position position="225"/>
    </location>
    <ligand>
        <name>(2E)-4-hydroxy-3-methylbut-2-enyl diphosphate</name>
        <dbReference type="ChEBI" id="CHEBI:128753"/>
    </ligand>
</feature>
<feature type="binding site" evidence="1">
    <location>
        <position position="225"/>
    </location>
    <ligand>
        <name>dimethylallyl diphosphate</name>
        <dbReference type="ChEBI" id="CHEBI:57623"/>
    </ligand>
</feature>
<feature type="binding site" evidence="1">
    <location>
        <position position="225"/>
    </location>
    <ligand>
        <name>isopentenyl diphosphate</name>
        <dbReference type="ChEBI" id="CHEBI:128769"/>
    </ligand>
</feature>
<feature type="binding site" evidence="1">
    <location>
        <position position="267"/>
    </location>
    <ligand>
        <name>(2E)-4-hydroxy-3-methylbut-2-enyl diphosphate</name>
        <dbReference type="ChEBI" id="CHEBI:128753"/>
    </ligand>
</feature>
<feature type="binding site" evidence="1">
    <location>
        <position position="267"/>
    </location>
    <ligand>
        <name>dimethylallyl diphosphate</name>
        <dbReference type="ChEBI" id="CHEBI:57623"/>
    </ligand>
</feature>
<feature type="binding site" evidence="1">
    <location>
        <position position="267"/>
    </location>
    <ligand>
        <name>isopentenyl diphosphate</name>
        <dbReference type="ChEBI" id="CHEBI:128769"/>
    </ligand>
</feature>
<proteinExistence type="inferred from homology"/>
<evidence type="ECO:0000255" key="1">
    <source>
        <dbReference type="HAMAP-Rule" id="MF_00191"/>
    </source>
</evidence>
<keyword id="KW-0004">4Fe-4S</keyword>
<keyword id="KW-0408">Iron</keyword>
<keyword id="KW-0411">Iron-sulfur</keyword>
<keyword id="KW-0414">Isoprene biosynthesis</keyword>
<keyword id="KW-0479">Metal-binding</keyword>
<keyword id="KW-0560">Oxidoreductase</keyword>
<keyword id="KW-1185">Reference proteome</keyword>
<sequence>MRILLAEPRGFCAGVDRAIAIVLKALEKFGPPIYVRHEIVHNRWVVEHLRNQGAVFVHELDEIPDGAVAIYSAHGVSKAVQAEGERRPLHILDATCPLVDKVHREAERLDHDHYQVLLIGHAGHPEVEGTMGQLQQARMKLISHPDDVAQLRLSNPQKVAYITQTTLSVDETRAMVAQLKARFPTIKEPAKEDICYATQNRQNAVKALAQASDLILVLGAPNSSNSNRLREVAEQHGCRAFLIENAKDVEIQWLEGVETLGITAGASAPEILVEELLAHLHAEQHQVELLSVTKEYLAFPLPLELRE</sequence>
<dbReference type="EC" id="1.17.7.4" evidence="1"/>
<dbReference type="EMBL" id="CP000471">
    <property type="protein sequence ID" value="ABK45914.1"/>
    <property type="molecule type" value="Genomic_DNA"/>
</dbReference>
<dbReference type="RefSeq" id="WP_011714971.1">
    <property type="nucleotide sequence ID" value="NC_008576.1"/>
</dbReference>
<dbReference type="SMR" id="A0LD71"/>
<dbReference type="STRING" id="156889.Mmc1_3428"/>
<dbReference type="KEGG" id="mgm:Mmc1_3428"/>
<dbReference type="eggNOG" id="COG0761">
    <property type="taxonomic scope" value="Bacteria"/>
</dbReference>
<dbReference type="HOGENOM" id="CLU_027486_1_0_5"/>
<dbReference type="OrthoDB" id="9804068at2"/>
<dbReference type="UniPathway" id="UPA00056">
    <property type="reaction ID" value="UER00097"/>
</dbReference>
<dbReference type="UniPathway" id="UPA00059">
    <property type="reaction ID" value="UER00105"/>
</dbReference>
<dbReference type="Proteomes" id="UP000002586">
    <property type="component" value="Chromosome"/>
</dbReference>
<dbReference type="GO" id="GO:0051539">
    <property type="term" value="F:4 iron, 4 sulfur cluster binding"/>
    <property type="evidence" value="ECO:0007669"/>
    <property type="project" value="UniProtKB-UniRule"/>
</dbReference>
<dbReference type="GO" id="GO:0051745">
    <property type="term" value="F:4-hydroxy-3-methylbut-2-enyl diphosphate reductase activity"/>
    <property type="evidence" value="ECO:0007669"/>
    <property type="project" value="UniProtKB-UniRule"/>
</dbReference>
<dbReference type="GO" id="GO:0046872">
    <property type="term" value="F:metal ion binding"/>
    <property type="evidence" value="ECO:0007669"/>
    <property type="project" value="UniProtKB-KW"/>
</dbReference>
<dbReference type="GO" id="GO:0050992">
    <property type="term" value="P:dimethylallyl diphosphate biosynthetic process"/>
    <property type="evidence" value="ECO:0007669"/>
    <property type="project" value="UniProtKB-UniRule"/>
</dbReference>
<dbReference type="GO" id="GO:0019288">
    <property type="term" value="P:isopentenyl diphosphate biosynthetic process, methylerythritol 4-phosphate pathway"/>
    <property type="evidence" value="ECO:0007669"/>
    <property type="project" value="UniProtKB-UniRule"/>
</dbReference>
<dbReference type="GO" id="GO:0016114">
    <property type="term" value="P:terpenoid biosynthetic process"/>
    <property type="evidence" value="ECO:0007669"/>
    <property type="project" value="UniProtKB-UniRule"/>
</dbReference>
<dbReference type="CDD" id="cd13944">
    <property type="entry name" value="lytB_ispH"/>
    <property type="match status" value="1"/>
</dbReference>
<dbReference type="Gene3D" id="3.40.50.11270">
    <property type="match status" value="1"/>
</dbReference>
<dbReference type="Gene3D" id="3.40.1010.20">
    <property type="entry name" value="4-hydroxy-3-methylbut-2-enyl diphosphate reductase, catalytic domain"/>
    <property type="match status" value="2"/>
</dbReference>
<dbReference type="HAMAP" id="MF_00191">
    <property type="entry name" value="IspH"/>
    <property type="match status" value="1"/>
</dbReference>
<dbReference type="InterPro" id="IPR003451">
    <property type="entry name" value="LytB/IspH"/>
</dbReference>
<dbReference type="NCBIfam" id="TIGR00216">
    <property type="entry name" value="ispH_lytB"/>
    <property type="match status" value="1"/>
</dbReference>
<dbReference type="NCBIfam" id="NF002188">
    <property type="entry name" value="PRK01045.1-2"/>
    <property type="match status" value="1"/>
</dbReference>
<dbReference type="NCBIfam" id="NF002190">
    <property type="entry name" value="PRK01045.1-4"/>
    <property type="match status" value="1"/>
</dbReference>
<dbReference type="PANTHER" id="PTHR30426">
    <property type="entry name" value="4-HYDROXY-3-METHYLBUT-2-ENYL DIPHOSPHATE REDUCTASE"/>
    <property type="match status" value="1"/>
</dbReference>
<dbReference type="PANTHER" id="PTHR30426:SF0">
    <property type="entry name" value="4-HYDROXY-3-METHYLBUT-2-ENYL DIPHOSPHATE REDUCTASE"/>
    <property type="match status" value="1"/>
</dbReference>
<dbReference type="Pfam" id="PF02401">
    <property type="entry name" value="LYTB"/>
    <property type="match status" value="1"/>
</dbReference>
<accession>A0LD71</accession>
<organism>
    <name type="scientific">Magnetococcus marinus (strain ATCC BAA-1437 / JCM 17883 / MC-1)</name>
    <dbReference type="NCBI Taxonomy" id="156889"/>
    <lineage>
        <taxon>Bacteria</taxon>
        <taxon>Pseudomonadati</taxon>
        <taxon>Pseudomonadota</taxon>
        <taxon>Alphaproteobacteria</taxon>
        <taxon>Magnetococcales</taxon>
        <taxon>Magnetococcaceae</taxon>
        <taxon>Magnetococcus</taxon>
    </lineage>
</organism>
<reference key="1">
    <citation type="journal article" date="2009" name="Appl. Environ. Microbiol.">
        <title>Complete genome sequence of the chemolithoautotrophic marine magnetotactic coccus strain MC-1.</title>
        <authorList>
            <person name="Schubbe S."/>
            <person name="Williams T.J."/>
            <person name="Xie G."/>
            <person name="Kiss H.E."/>
            <person name="Brettin T.S."/>
            <person name="Martinez D."/>
            <person name="Ross C.A."/>
            <person name="Schuler D."/>
            <person name="Cox B.L."/>
            <person name="Nealson K.H."/>
            <person name="Bazylinski D.A."/>
        </authorList>
    </citation>
    <scope>NUCLEOTIDE SEQUENCE [LARGE SCALE GENOMIC DNA]</scope>
    <source>
        <strain>ATCC BAA-1437 / JCM 17883 / MC-1</strain>
    </source>
</reference>